<gene>
    <name type="primary">rpl35b</name>
    <name type="synonym">rpl33a</name>
    <name type="synonym">rpl3701</name>
    <name type="ORF">SPBC1921.01c</name>
    <name type="ORF">SPBC29C10.01c</name>
</gene>
<name>RL33A_SCHPO</name>
<comment type="function">
    <text evidence="1">Component of the ribosome, a large ribonucleoprotein complex responsible for the synthesis of proteins in the cell. The small ribosomal subunit (SSU) binds messenger RNAs (mRNAs) and translates the encoded message by selecting cognate aminoacyl-transfer RNA (tRNA) molecules. The large subunit (LSU) contains the ribosomal catalytic site termed the peptidyl transferase center (PTC), which catalyzes the formation of peptide bonds, thereby polymerizing the amino acids delivered by tRNAs into a polypeptide chain. The nascent polypeptides leave the ribosome through a tunnel in the LSU and interact with protein factors that function in enzymatic processing, targeting, and the membrane insertion of nascent chains at the exit of the ribosomal tunnel.</text>
</comment>
<comment type="subunit">
    <text evidence="1">Component of the large ribosomal subunit (LSU). Mature yeast ribosomes consist of a small (40S) and a large (60S) subunit. The 40S small subunit contains 1 molecule of ribosomal RNA (18S rRNA) and at least 33 different proteins. The large 60S subunit contains 3 rRNA molecules (25S, 5.8S and 5S rRNA) and at least 46 different proteins.</text>
</comment>
<comment type="subcellular location">
    <subcellularLocation>
        <location evidence="2">Cytoplasm</location>
    </subcellularLocation>
    <subcellularLocation>
        <location evidence="2">Nucleus</location>
        <location evidence="2">Nucleolus</location>
    </subcellularLocation>
</comment>
<comment type="miscellaneous">
    <text>There are 2 genes for eL33 in S.pombe.</text>
</comment>
<comment type="similarity">
    <text evidence="3">Belongs to the eukaryotic ribosomal protein eL33 family.</text>
</comment>
<proteinExistence type="evidence at protein level"/>
<evidence type="ECO:0000250" key="1">
    <source>
        <dbReference type="UniProtKB" id="P05744"/>
    </source>
</evidence>
<evidence type="ECO:0000269" key="2">
    <source>
    </source>
</evidence>
<evidence type="ECO:0000305" key="3"/>
<organism>
    <name type="scientific">Schizosaccharomyces pombe (strain 972 / ATCC 24843)</name>
    <name type="common">Fission yeast</name>
    <dbReference type="NCBI Taxonomy" id="284812"/>
    <lineage>
        <taxon>Eukaryota</taxon>
        <taxon>Fungi</taxon>
        <taxon>Dikarya</taxon>
        <taxon>Ascomycota</taxon>
        <taxon>Taphrinomycotina</taxon>
        <taxon>Schizosaccharomycetes</taxon>
        <taxon>Schizosaccharomycetales</taxon>
        <taxon>Schizosaccharomycetaceae</taxon>
        <taxon>Schizosaccharomyces</taxon>
    </lineage>
</organism>
<dbReference type="EMBL" id="CU329671">
    <property type="protein sequence ID" value="CAD99404.2"/>
    <property type="molecule type" value="Genomic_DNA"/>
</dbReference>
<dbReference type="PIR" id="T39785">
    <property type="entry name" value="T39785"/>
</dbReference>
<dbReference type="PDB" id="9AXT">
    <property type="method" value="EM"/>
    <property type="resolution" value="2.40 A"/>
    <property type="chains" value="Br=1-108"/>
</dbReference>
<dbReference type="PDB" id="9AXU">
    <property type="method" value="EM"/>
    <property type="resolution" value="1.94 A"/>
    <property type="chains" value="r=1-108"/>
</dbReference>
<dbReference type="PDB" id="9AXV">
    <property type="method" value="EM"/>
    <property type="resolution" value="2.40 A"/>
    <property type="chains" value="Br=1-108"/>
</dbReference>
<dbReference type="PDBsum" id="9AXT"/>
<dbReference type="PDBsum" id="9AXU"/>
<dbReference type="PDBsum" id="9AXV"/>
<dbReference type="EMDB" id="EMD-43972"/>
<dbReference type="EMDB" id="EMD-43973"/>
<dbReference type="EMDB" id="EMD-43976"/>
<dbReference type="SMR" id="Q9USX4"/>
<dbReference type="BioGRID" id="280371">
    <property type="interactions" value="21"/>
</dbReference>
<dbReference type="FunCoup" id="Q9USX4">
    <property type="interactions" value="394"/>
</dbReference>
<dbReference type="STRING" id="284812.Q9USX4"/>
<dbReference type="iPTMnet" id="Q9USX4"/>
<dbReference type="PaxDb" id="4896-SPBC1921.01c.1"/>
<dbReference type="EnsemblFungi" id="SPBC1921.01c.1">
    <property type="protein sequence ID" value="SPBC1921.01c.1:pep"/>
    <property type="gene ID" value="SPBC1921.01c"/>
</dbReference>
<dbReference type="KEGG" id="spo:3361295"/>
<dbReference type="PomBase" id="SPBC1921.01c">
    <property type="gene designation" value="rpl35b"/>
</dbReference>
<dbReference type="VEuPathDB" id="FungiDB:SPBC1921.01c"/>
<dbReference type="eggNOG" id="KOG0887">
    <property type="taxonomic scope" value="Eukaryota"/>
</dbReference>
<dbReference type="HOGENOM" id="CLU_100745_1_0_1"/>
<dbReference type="InParanoid" id="Q9USX4"/>
<dbReference type="OMA" id="YRTNKHH"/>
<dbReference type="PhylomeDB" id="Q9USX4"/>
<dbReference type="PRO" id="PR:Q9USX4"/>
<dbReference type="Proteomes" id="UP000002485">
    <property type="component" value="Chromosome II"/>
</dbReference>
<dbReference type="GO" id="GO:0005829">
    <property type="term" value="C:cytosol"/>
    <property type="evidence" value="ECO:0007005"/>
    <property type="project" value="PomBase"/>
</dbReference>
<dbReference type="GO" id="GO:0022625">
    <property type="term" value="C:cytosolic large ribosomal subunit"/>
    <property type="evidence" value="ECO:0000269"/>
    <property type="project" value="PomBase"/>
</dbReference>
<dbReference type="GO" id="GO:0005730">
    <property type="term" value="C:nucleolus"/>
    <property type="evidence" value="ECO:0007005"/>
    <property type="project" value="PomBase"/>
</dbReference>
<dbReference type="GO" id="GO:0019843">
    <property type="term" value="F:rRNA binding"/>
    <property type="evidence" value="ECO:0000250"/>
    <property type="project" value="PomBase"/>
</dbReference>
<dbReference type="GO" id="GO:0003735">
    <property type="term" value="F:structural constituent of ribosome"/>
    <property type="evidence" value="ECO:0000318"/>
    <property type="project" value="GO_Central"/>
</dbReference>
<dbReference type="GO" id="GO:0008270">
    <property type="term" value="F:zinc ion binding"/>
    <property type="evidence" value="ECO:0000250"/>
    <property type="project" value="PomBase"/>
</dbReference>
<dbReference type="GO" id="GO:0002181">
    <property type="term" value="P:cytoplasmic translation"/>
    <property type="evidence" value="ECO:0000318"/>
    <property type="project" value="GO_Central"/>
</dbReference>
<dbReference type="GO" id="GO:0042273">
    <property type="term" value="P:ribosomal large subunit biogenesis"/>
    <property type="evidence" value="ECO:0000318"/>
    <property type="project" value="GO_Central"/>
</dbReference>
<dbReference type="FunFam" id="2.40.10.190:FF:000001">
    <property type="entry name" value="60S ribosomal protein L35a"/>
    <property type="match status" value="1"/>
</dbReference>
<dbReference type="Gene3D" id="2.40.10.190">
    <property type="entry name" value="translation elongation factor selb, chain A, domain 4"/>
    <property type="match status" value="1"/>
</dbReference>
<dbReference type="HAMAP" id="MF_00573">
    <property type="entry name" value="Ribosomal_eL33"/>
    <property type="match status" value="1"/>
</dbReference>
<dbReference type="InterPro" id="IPR001780">
    <property type="entry name" value="Ribosomal_eL33"/>
</dbReference>
<dbReference type="InterPro" id="IPR018266">
    <property type="entry name" value="Ribosomal_eL33_CS"/>
</dbReference>
<dbReference type="InterPro" id="IPR038661">
    <property type="entry name" value="Ribosomal_eL33_sf"/>
</dbReference>
<dbReference type="InterPro" id="IPR009000">
    <property type="entry name" value="Transl_B-barrel_sf"/>
</dbReference>
<dbReference type="PANTHER" id="PTHR10902">
    <property type="entry name" value="60S RIBOSOMAL PROTEIN L35A"/>
    <property type="match status" value="1"/>
</dbReference>
<dbReference type="Pfam" id="PF01247">
    <property type="entry name" value="Ribosomal_L35Ae"/>
    <property type="match status" value="1"/>
</dbReference>
<dbReference type="SUPFAM" id="SSF50447">
    <property type="entry name" value="Translation proteins"/>
    <property type="match status" value="1"/>
</dbReference>
<dbReference type="PROSITE" id="PS01105">
    <property type="entry name" value="RIBOSOMAL_L35AE"/>
    <property type="match status" value="1"/>
</dbReference>
<protein>
    <recommendedName>
        <fullName evidence="3">Large ribosomal subunit protein eL33A</fullName>
    </recommendedName>
    <alternativeName>
        <fullName>60S ribosomal protein L33-A</fullName>
    </alternativeName>
    <alternativeName>
        <fullName>L37A</fullName>
    </alternativeName>
</protein>
<accession>Q9USX4</accession>
<accession>Q7Z982</accession>
<accession>Q9P3W0</accession>
<sequence>MPAQGHRLYVKAKHLSFQRSKHVIHPGTSLVKIEGCDSKEEAQFYLGKRICFVYKSNKPVRGSKIRVIWGTVSRPHGNSGVVRARFTHNLPPKTFGASLRVMLYPSNV</sequence>
<keyword id="KW-0002">3D-structure</keyword>
<keyword id="KW-0963">Cytoplasm</keyword>
<keyword id="KW-0539">Nucleus</keyword>
<keyword id="KW-1185">Reference proteome</keyword>
<keyword id="KW-0687">Ribonucleoprotein</keyword>
<keyword id="KW-0689">Ribosomal protein</keyword>
<feature type="chain" id="PRO_0000192805" description="Large ribosomal subunit protein eL33A">
    <location>
        <begin position="1"/>
        <end position="108"/>
    </location>
</feature>
<reference key="1">
    <citation type="journal article" date="2002" name="Nature">
        <title>The genome sequence of Schizosaccharomyces pombe.</title>
        <authorList>
            <person name="Wood V."/>
            <person name="Gwilliam R."/>
            <person name="Rajandream M.A."/>
            <person name="Lyne M.H."/>
            <person name="Lyne R."/>
            <person name="Stewart A."/>
            <person name="Sgouros J.G."/>
            <person name="Peat N."/>
            <person name="Hayles J."/>
            <person name="Baker S.G."/>
            <person name="Basham D."/>
            <person name="Bowman S."/>
            <person name="Brooks K."/>
            <person name="Brown D."/>
            <person name="Brown S."/>
            <person name="Chillingworth T."/>
            <person name="Churcher C.M."/>
            <person name="Collins M."/>
            <person name="Connor R."/>
            <person name="Cronin A."/>
            <person name="Davis P."/>
            <person name="Feltwell T."/>
            <person name="Fraser A."/>
            <person name="Gentles S."/>
            <person name="Goble A."/>
            <person name="Hamlin N."/>
            <person name="Harris D.E."/>
            <person name="Hidalgo J."/>
            <person name="Hodgson G."/>
            <person name="Holroyd S."/>
            <person name="Hornsby T."/>
            <person name="Howarth S."/>
            <person name="Huckle E.J."/>
            <person name="Hunt S."/>
            <person name="Jagels K."/>
            <person name="James K.D."/>
            <person name="Jones L."/>
            <person name="Jones M."/>
            <person name="Leather S."/>
            <person name="McDonald S."/>
            <person name="McLean J."/>
            <person name="Mooney P."/>
            <person name="Moule S."/>
            <person name="Mungall K.L."/>
            <person name="Murphy L.D."/>
            <person name="Niblett D."/>
            <person name="Odell C."/>
            <person name="Oliver K."/>
            <person name="O'Neil S."/>
            <person name="Pearson D."/>
            <person name="Quail M.A."/>
            <person name="Rabbinowitsch E."/>
            <person name="Rutherford K.M."/>
            <person name="Rutter S."/>
            <person name="Saunders D."/>
            <person name="Seeger K."/>
            <person name="Sharp S."/>
            <person name="Skelton J."/>
            <person name="Simmonds M.N."/>
            <person name="Squares R."/>
            <person name="Squares S."/>
            <person name="Stevens K."/>
            <person name="Taylor K."/>
            <person name="Taylor R.G."/>
            <person name="Tivey A."/>
            <person name="Walsh S.V."/>
            <person name="Warren T."/>
            <person name="Whitehead S."/>
            <person name="Woodward J.R."/>
            <person name="Volckaert G."/>
            <person name="Aert R."/>
            <person name="Robben J."/>
            <person name="Grymonprez B."/>
            <person name="Weltjens I."/>
            <person name="Vanstreels E."/>
            <person name="Rieger M."/>
            <person name="Schaefer M."/>
            <person name="Mueller-Auer S."/>
            <person name="Gabel C."/>
            <person name="Fuchs M."/>
            <person name="Duesterhoeft A."/>
            <person name="Fritzc C."/>
            <person name="Holzer E."/>
            <person name="Moestl D."/>
            <person name="Hilbert H."/>
            <person name="Borzym K."/>
            <person name="Langer I."/>
            <person name="Beck A."/>
            <person name="Lehrach H."/>
            <person name="Reinhardt R."/>
            <person name="Pohl T.M."/>
            <person name="Eger P."/>
            <person name="Zimmermann W."/>
            <person name="Wedler H."/>
            <person name="Wambutt R."/>
            <person name="Purnelle B."/>
            <person name="Goffeau A."/>
            <person name="Cadieu E."/>
            <person name="Dreano S."/>
            <person name="Gloux S."/>
            <person name="Lelaure V."/>
            <person name="Mottier S."/>
            <person name="Galibert F."/>
            <person name="Aves S.J."/>
            <person name="Xiang Z."/>
            <person name="Hunt C."/>
            <person name="Moore K."/>
            <person name="Hurst S.M."/>
            <person name="Lucas M."/>
            <person name="Rochet M."/>
            <person name="Gaillardin C."/>
            <person name="Tallada V.A."/>
            <person name="Garzon A."/>
            <person name="Thode G."/>
            <person name="Daga R.R."/>
            <person name="Cruzado L."/>
            <person name="Jimenez J."/>
            <person name="Sanchez M."/>
            <person name="del Rey F."/>
            <person name="Benito J."/>
            <person name="Dominguez A."/>
            <person name="Revuelta J.L."/>
            <person name="Moreno S."/>
            <person name="Armstrong J."/>
            <person name="Forsburg S.L."/>
            <person name="Cerutti L."/>
            <person name="Lowe T."/>
            <person name="McCombie W.R."/>
            <person name="Paulsen I."/>
            <person name="Potashkin J."/>
            <person name="Shpakovski G.V."/>
            <person name="Ussery D."/>
            <person name="Barrell B.G."/>
            <person name="Nurse P."/>
        </authorList>
    </citation>
    <scope>NUCLEOTIDE SEQUENCE [LARGE SCALE GENOMIC DNA]</scope>
    <source>
        <strain>972 / ATCC 24843</strain>
    </source>
</reference>
<reference key="2">
    <citation type="journal article" date="2006" name="Nat. Biotechnol.">
        <title>ORFeome cloning and global analysis of protein localization in the fission yeast Schizosaccharomyces pombe.</title>
        <authorList>
            <person name="Matsuyama A."/>
            <person name="Arai R."/>
            <person name="Yashiroda Y."/>
            <person name="Shirai A."/>
            <person name="Kamata A."/>
            <person name="Sekido S."/>
            <person name="Kobayashi Y."/>
            <person name="Hashimoto A."/>
            <person name="Hamamoto M."/>
            <person name="Hiraoka Y."/>
            <person name="Horinouchi S."/>
            <person name="Yoshida M."/>
        </authorList>
    </citation>
    <scope>SUBCELLULAR LOCATION [LARGE SCALE ANALYSIS]</scope>
</reference>